<evidence type="ECO:0000255" key="1">
    <source>
        <dbReference type="HAMAP-Rule" id="MF_00747"/>
    </source>
</evidence>
<evidence type="ECO:0000256" key="2">
    <source>
        <dbReference type="SAM" id="MobiDB-lite"/>
    </source>
</evidence>
<accession>B2AG85</accession>
<dbReference type="EC" id="2.7.11.5" evidence="1"/>
<dbReference type="EC" id="3.1.3.-" evidence="1"/>
<dbReference type="EMBL" id="CU633749">
    <property type="protein sequence ID" value="CAP62784.1"/>
    <property type="molecule type" value="Genomic_DNA"/>
</dbReference>
<dbReference type="RefSeq" id="WP_012351452.1">
    <property type="nucleotide sequence ID" value="NC_010528.1"/>
</dbReference>
<dbReference type="SMR" id="B2AG85"/>
<dbReference type="GeneID" id="29762278"/>
<dbReference type="KEGG" id="cti:RALTA_A0111"/>
<dbReference type="eggNOG" id="COG4579">
    <property type="taxonomic scope" value="Bacteria"/>
</dbReference>
<dbReference type="HOGENOM" id="CLU_033804_1_1_4"/>
<dbReference type="BioCyc" id="CTAI977880:RALTA_RS00550-MONOMER"/>
<dbReference type="Proteomes" id="UP000001692">
    <property type="component" value="Chromosome 1"/>
</dbReference>
<dbReference type="GO" id="GO:0005737">
    <property type="term" value="C:cytoplasm"/>
    <property type="evidence" value="ECO:0007669"/>
    <property type="project" value="UniProtKB-SubCell"/>
</dbReference>
<dbReference type="GO" id="GO:0008772">
    <property type="term" value="F:[isocitrate dehydrogenase (NADP+)] kinase activity"/>
    <property type="evidence" value="ECO:0007669"/>
    <property type="project" value="UniProtKB-UniRule"/>
</dbReference>
<dbReference type="GO" id="GO:0016208">
    <property type="term" value="F:AMP binding"/>
    <property type="evidence" value="ECO:0007669"/>
    <property type="project" value="TreeGrafter"/>
</dbReference>
<dbReference type="GO" id="GO:0005524">
    <property type="term" value="F:ATP binding"/>
    <property type="evidence" value="ECO:0007669"/>
    <property type="project" value="UniProtKB-UniRule"/>
</dbReference>
<dbReference type="GO" id="GO:0004721">
    <property type="term" value="F:phosphoprotein phosphatase activity"/>
    <property type="evidence" value="ECO:0007669"/>
    <property type="project" value="UniProtKB-KW"/>
</dbReference>
<dbReference type="GO" id="GO:0004674">
    <property type="term" value="F:protein serine/threonine kinase activity"/>
    <property type="evidence" value="ECO:0007669"/>
    <property type="project" value="UniProtKB-KW"/>
</dbReference>
<dbReference type="GO" id="GO:0006006">
    <property type="term" value="P:glucose metabolic process"/>
    <property type="evidence" value="ECO:0007669"/>
    <property type="project" value="InterPro"/>
</dbReference>
<dbReference type="GO" id="GO:0006097">
    <property type="term" value="P:glyoxylate cycle"/>
    <property type="evidence" value="ECO:0007669"/>
    <property type="project" value="UniProtKB-UniRule"/>
</dbReference>
<dbReference type="GO" id="GO:0006099">
    <property type="term" value="P:tricarboxylic acid cycle"/>
    <property type="evidence" value="ECO:0007669"/>
    <property type="project" value="UniProtKB-UniRule"/>
</dbReference>
<dbReference type="HAMAP" id="MF_00747">
    <property type="entry name" value="AceK"/>
    <property type="match status" value="1"/>
</dbReference>
<dbReference type="InterPro" id="IPR046855">
    <property type="entry name" value="AceK_kinase"/>
</dbReference>
<dbReference type="InterPro" id="IPR046854">
    <property type="entry name" value="AceK_regulatory"/>
</dbReference>
<dbReference type="InterPro" id="IPR010452">
    <property type="entry name" value="Isocitrate_DH_AceK"/>
</dbReference>
<dbReference type="NCBIfam" id="NF002804">
    <property type="entry name" value="PRK02946.1"/>
    <property type="match status" value="1"/>
</dbReference>
<dbReference type="PANTHER" id="PTHR39559">
    <property type="match status" value="1"/>
</dbReference>
<dbReference type="PANTHER" id="PTHR39559:SF1">
    <property type="entry name" value="ISOCITRATE DEHYDROGENASE KINASE_PHOSPHATASE"/>
    <property type="match status" value="1"/>
</dbReference>
<dbReference type="Pfam" id="PF06315">
    <property type="entry name" value="AceK_kinase"/>
    <property type="match status" value="1"/>
</dbReference>
<dbReference type="Pfam" id="PF20423">
    <property type="entry name" value="AceK_regulatory"/>
    <property type="match status" value="1"/>
</dbReference>
<dbReference type="PIRSF" id="PIRSF000719">
    <property type="entry name" value="AceK"/>
    <property type="match status" value="1"/>
</dbReference>
<feature type="chain" id="PRO_1000133263" description="Isocitrate dehydrogenase kinase/phosphatase">
    <location>
        <begin position="1"/>
        <end position="615"/>
    </location>
</feature>
<feature type="region of interest" description="Disordered" evidence="2">
    <location>
        <begin position="595"/>
        <end position="615"/>
    </location>
</feature>
<feature type="active site" evidence="1">
    <location>
        <position position="384"/>
    </location>
</feature>
<feature type="binding site" evidence="1">
    <location>
        <begin position="328"/>
        <end position="334"/>
    </location>
    <ligand>
        <name>ATP</name>
        <dbReference type="ChEBI" id="CHEBI:30616"/>
    </ligand>
</feature>
<feature type="binding site" evidence="1">
    <location>
        <position position="349"/>
    </location>
    <ligand>
        <name>ATP</name>
        <dbReference type="ChEBI" id="CHEBI:30616"/>
    </ligand>
</feature>
<proteinExistence type="inferred from homology"/>
<protein>
    <recommendedName>
        <fullName evidence="1">Isocitrate dehydrogenase kinase/phosphatase</fullName>
        <shortName evidence="1">IDH kinase/phosphatase</shortName>
        <shortName evidence="1">IDHK/P</shortName>
        <ecNumber evidence="1">2.7.11.5</ecNumber>
        <ecNumber evidence="1">3.1.3.-</ecNumber>
    </recommendedName>
</protein>
<reference key="1">
    <citation type="journal article" date="2008" name="Genome Res.">
        <title>Genome sequence of the beta-rhizobium Cupriavidus taiwanensis and comparative genomics of rhizobia.</title>
        <authorList>
            <person name="Amadou C."/>
            <person name="Pascal G."/>
            <person name="Mangenot S."/>
            <person name="Glew M."/>
            <person name="Bontemps C."/>
            <person name="Capela D."/>
            <person name="Carrere S."/>
            <person name="Cruveiller S."/>
            <person name="Dossat C."/>
            <person name="Lajus A."/>
            <person name="Marchetti M."/>
            <person name="Poinsot V."/>
            <person name="Rouy Z."/>
            <person name="Servin B."/>
            <person name="Saad M."/>
            <person name="Schenowitz C."/>
            <person name="Barbe V."/>
            <person name="Batut J."/>
            <person name="Medigue C."/>
            <person name="Masson-Boivin C."/>
        </authorList>
    </citation>
    <scope>NUCLEOTIDE SEQUENCE [LARGE SCALE GENOMIC DNA]</scope>
    <source>
        <strain>DSM 17343 / BCRC 17206 / CCUG 44338 / CIP 107171 / LMG 19424 / R1</strain>
    </source>
</reference>
<comment type="function">
    <text evidence="1">Bifunctional enzyme which can phosphorylate or dephosphorylate isocitrate dehydrogenase (IDH) on a specific serine residue. This is a regulatory mechanism which enables bacteria to bypass the Krebs cycle via the glyoxylate shunt in response to the source of carbon. When bacteria are grown on glucose, IDH is fully active and unphosphorylated, but when grown on acetate or ethanol, the activity of IDH declines drastically concomitant with its phosphorylation.</text>
</comment>
<comment type="catalytic activity">
    <reaction evidence="1">
        <text>L-seryl-[isocitrate dehydrogenase] + ATP = O-phospho-L-seryl-[isocitrate dehydrogenase] + ADP + H(+)</text>
        <dbReference type="Rhea" id="RHEA:43540"/>
        <dbReference type="Rhea" id="RHEA-COMP:10605"/>
        <dbReference type="Rhea" id="RHEA-COMP:10606"/>
        <dbReference type="ChEBI" id="CHEBI:15378"/>
        <dbReference type="ChEBI" id="CHEBI:29999"/>
        <dbReference type="ChEBI" id="CHEBI:30616"/>
        <dbReference type="ChEBI" id="CHEBI:83421"/>
        <dbReference type="ChEBI" id="CHEBI:456216"/>
        <dbReference type="EC" id="2.7.11.5"/>
    </reaction>
</comment>
<comment type="subcellular location">
    <subcellularLocation>
        <location evidence="1">Cytoplasm</location>
    </subcellularLocation>
</comment>
<comment type="similarity">
    <text evidence="1">Belongs to the AceK family.</text>
</comment>
<name>ACEK_CUPTR</name>
<gene>
    <name evidence="1" type="primary">aceK</name>
    <name type="ordered locus">RALTA_A0111</name>
</gene>
<keyword id="KW-0067">ATP-binding</keyword>
<keyword id="KW-0963">Cytoplasm</keyword>
<keyword id="KW-0329">Glyoxylate bypass</keyword>
<keyword id="KW-0378">Hydrolase</keyword>
<keyword id="KW-0418">Kinase</keyword>
<keyword id="KW-0547">Nucleotide-binding</keyword>
<keyword id="KW-0904">Protein phosphatase</keyword>
<keyword id="KW-0723">Serine/threonine-protein kinase</keyword>
<keyword id="KW-0808">Transferase</keyword>
<keyword id="KW-0816">Tricarboxylic acid cycle</keyword>
<organism>
    <name type="scientific">Cupriavidus taiwanensis (strain DSM 17343 / BCRC 17206 / CCUG 44338 / CIP 107171 / LMG 19424 / R1)</name>
    <name type="common">Ralstonia taiwanensis (strain LMG 19424)</name>
    <dbReference type="NCBI Taxonomy" id="977880"/>
    <lineage>
        <taxon>Bacteria</taxon>
        <taxon>Pseudomonadati</taxon>
        <taxon>Pseudomonadota</taxon>
        <taxon>Betaproteobacteria</taxon>
        <taxon>Burkholderiales</taxon>
        <taxon>Burkholderiaceae</taxon>
        <taxon>Cupriavidus</taxon>
    </lineage>
</organism>
<sequence>MSHFPKLLSSQIAYDVARTMLDGFDKHYRLFREVSHQAKLKFEAGDWHGLQQIQRDRIAFYNERVRESSVILEDEYDAENIEDEIWQQIKLHYIGLLTNHHQPELAETFFNSVCTRILHRSYFNNDFIFVRPAISTEYIENEESPTRPTFRAYYPGSREGMAACFERIVHNFQLERPFEDLQRDIGYVVRAVGEHFGDLRIAPNFQIHTLSSLFFRNKAAFIIGRILNGDRTFPLAIPILHGPSGKLVLDTVLLKKEQLLILFSFTHSYFMVDMEIPSAYVTFLRDIMPRKPRAEIYTSLGLQKQGKNLFYRDFLHHLQHSSDKFIVAPGIRGLVMLVFTLPSYPYVFKVIRDVFPAPKETTRELVKSKYQLVKQHDRVGRMADTLEYSDVAFPLSRFDEALVREFEQHAPSMIEYQRAKDGGEEIVVRHVYIERRMTPLNIYLQEGSDAQVEHGVIEYGNAIKELIAANIFPGDMLYKNFGVTRHGRVVFYDYDEIEYLTDCNIRHVPQPRNEEEEMSGEVWYTVRPHDIFPETFRTFLLGDPRVGAAFLRHHADFFDPAMWQSHKDRLLAGHVHDFFAYHASDRFIHRYGAAAEPPATPPVKQPDAGPARRVA</sequence>